<protein>
    <recommendedName>
        <fullName>Taste receptor type 2 member 16</fullName>
        <shortName>T2R16</shortName>
    </recommendedName>
    <alternativeName>
        <fullName>T2R18</fullName>
    </alternativeName>
    <alternativeName>
        <fullName>T2R3</fullName>
    </alternativeName>
    <alternativeName>
        <fullName evidence="5">Taste receptor type 2 member 118</fullName>
    </alternativeName>
</protein>
<accession>Q9JKU0</accession>
<sequence>MVPTQVTIFSIIMYVLESLVIIVQSCTTVAVLFREWMHFQRLSPVEIILISLGISHFCLQWTSMLYNFGTYSRPVLLFWKVSVVWEFMNVLTFWLTSLLAVLYCVKVSSFSHPVFLWLRLKILKLVLWLLLGALIASCLSIIPSVVKYHIQMELLTLDHLPKNSSLILRLQMFEWYFSNPFKMIGFGVPFLVFLISIILLTVSLVQHWGQMKHYSSSSSSLRAQCTVLKSLATFFIFFTSYFLTIVVSFIGTVFDKKSWFWVCEAVIYGLVCIHFTSLMMSNPTLKKALRLQFWSPESS</sequence>
<dbReference type="EMBL" id="AF227141">
    <property type="protein sequence ID" value="AAF43914.1"/>
    <property type="molecule type" value="mRNA"/>
</dbReference>
<dbReference type="RefSeq" id="NP_076484.1">
    <property type="nucleotide sequence ID" value="NM_023994.1"/>
</dbReference>
<dbReference type="SMR" id="Q9JKU0"/>
<dbReference type="FunCoup" id="Q9JKU0">
    <property type="interactions" value="87"/>
</dbReference>
<dbReference type="STRING" id="10116.ENSRNOP00000031530"/>
<dbReference type="GlyCosmos" id="Q9JKU0">
    <property type="glycosylation" value="1 site, No reported glycans"/>
</dbReference>
<dbReference type="GlyGen" id="Q9JKU0">
    <property type="glycosylation" value="1 site"/>
</dbReference>
<dbReference type="PhosphoSitePlus" id="Q9JKU0"/>
<dbReference type="PaxDb" id="10116-ENSRNOP00000031530"/>
<dbReference type="Ensembl" id="ENSRNOT00000034936.2">
    <property type="protein sequence ID" value="ENSRNOP00000031530.1"/>
    <property type="gene ID" value="ENSRNOG00000021799.2"/>
</dbReference>
<dbReference type="GeneID" id="78980"/>
<dbReference type="KEGG" id="rno:78980"/>
<dbReference type="UCSC" id="RGD:620735">
    <property type="organism name" value="rat"/>
</dbReference>
<dbReference type="AGR" id="RGD:620735"/>
<dbReference type="CTD" id="387347"/>
<dbReference type="RGD" id="620735">
    <property type="gene designation" value="Tas2r118"/>
</dbReference>
<dbReference type="eggNOG" id="ENOG502S2SI">
    <property type="taxonomic scope" value="Eukaryota"/>
</dbReference>
<dbReference type="GeneTree" id="ENSGT01100000263477"/>
<dbReference type="HOGENOM" id="CLU_072337_1_1_1"/>
<dbReference type="InParanoid" id="Q9JKU0"/>
<dbReference type="OMA" id="REWVQVK"/>
<dbReference type="OrthoDB" id="9834076at2759"/>
<dbReference type="PhylomeDB" id="Q9JKU0"/>
<dbReference type="TreeFam" id="TF335891"/>
<dbReference type="Reactome" id="R-RNO-418594">
    <property type="pathway name" value="G alpha (i) signalling events"/>
</dbReference>
<dbReference type="Reactome" id="R-RNO-420499">
    <property type="pathway name" value="Class C/3 (Metabotropic glutamate/pheromone receptors)"/>
</dbReference>
<dbReference type="Reactome" id="R-RNO-9717207">
    <property type="pathway name" value="Sensory perception of sweet, bitter, and umami (glutamate) taste"/>
</dbReference>
<dbReference type="PRO" id="PR:Q9JKU0"/>
<dbReference type="Proteomes" id="UP000002494">
    <property type="component" value="Chromosome 4"/>
</dbReference>
<dbReference type="GO" id="GO:0005783">
    <property type="term" value="C:endoplasmic reticulum"/>
    <property type="evidence" value="ECO:0000266"/>
    <property type="project" value="RGD"/>
</dbReference>
<dbReference type="GO" id="GO:0009897">
    <property type="term" value="C:external side of plasma membrane"/>
    <property type="evidence" value="ECO:0000266"/>
    <property type="project" value="RGD"/>
</dbReference>
<dbReference type="GO" id="GO:0016020">
    <property type="term" value="C:membrane"/>
    <property type="evidence" value="ECO:0000318"/>
    <property type="project" value="GO_Central"/>
</dbReference>
<dbReference type="GO" id="GO:0005802">
    <property type="term" value="C:trans-Golgi network"/>
    <property type="evidence" value="ECO:0000266"/>
    <property type="project" value="RGD"/>
</dbReference>
<dbReference type="GO" id="GO:0033038">
    <property type="term" value="F:bitter taste receptor activity"/>
    <property type="evidence" value="ECO:0000266"/>
    <property type="project" value="RGD"/>
</dbReference>
<dbReference type="GO" id="GO:0004930">
    <property type="term" value="F:G protein-coupled receptor activity"/>
    <property type="evidence" value="ECO:0007669"/>
    <property type="project" value="UniProtKB-KW"/>
</dbReference>
<dbReference type="GO" id="GO:0008527">
    <property type="term" value="F:taste receptor activity"/>
    <property type="evidence" value="ECO:0000304"/>
    <property type="project" value="UniProtKB"/>
</dbReference>
<dbReference type="GO" id="GO:0001580">
    <property type="term" value="P:detection of chemical stimulus involved in sensory perception of bitter taste"/>
    <property type="evidence" value="ECO:0000266"/>
    <property type="project" value="RGD"/>
</dbReference>
<dbReference type="FunFam" id="1.20.1070.10:FF:000055">
    <property type="entry name" value="Taste receptor type 2"/>
    <property type="match status" value="1"/>
</dbReference>
<dbReference type="InterPro" id="IPR007960">
    <property type="entry name" value="TAS2R"/>
</dbReference>
<dbReference type="PANTHER" id="PTHR11394">
    <property type="entry name" value="TASTE RECEPTOR TYPE 2"/>
    <property type="match status" value="1"/>
</dbReference>
<dbReference type="PANTHER" id="PTHR11394:SF68">
    <property type="entry name" value="TASTE RECEPTOR TYPE 2 MEMBER 16"/>
    <property type="match status" value="1"/>
</dbReference>
<dbReference type="Pfam" id="PF05296">
    <property type="entry name" value="TAS2R"/>
    <property type="match status" value="1"/>
</dbReference>
<dbReference type="SUPFAM" id="SSF81321">
    <property type="entry name" value="Family A G protein-coupled receptor-like"/>
    <property type="match status" value="1"/>
</dbReference>
<proteinExistence type="evidence at protein level"/>
<gene>
    <name type="primary">Tas2r16</name>
    <name evidence="5" type="synonym">Tas2r118</name>
    <name type="synonym">Tas2r18</name>
    <name type="synonym">Tas2r3</name>
</gene>
<organism>
    <name type="scientific">Rattus norvegicus</name>
    <name type="common">Rat</name>
    <dbReference type="NCBI Taxonomy" id="10116"/>
    <lineage>
        <taxon>Eukaryota</taxon>
        <taxon>Metazoa</taxon>
        <taxon>Chordata</taxon>
        <taxon>Craniata</taxon>
        <taxon>Vertebrata</taxon>
        <taxon>Euteleostomi</taxon>
        <taxon>Mammalia</taxon>
        <taxon>Eutheria</taxon>
        <taxon>Euarchontoglires</taxon>
        <taxon>Glires</taxon>
        <taxon>Rodentia</taxon>
        <taxon>Myomorpha</taxon>
        <taxon>Muroidea</taxon>
        <taxon>Muridae</taxon>
        <taxon>Murinae</taxon>
        <taxon>Rattus</taxon>
    </lineage>
</organism>
<comment type="function">
    <text>Gustducin-coupled receptor implicated in the perception of bitter compounds in the oral cavity and the gastrointestinal tract. Signals through PLCB2 and the calcium-regulated cation channel TRPM5.</text>
</comment>
<comment type="subunit">
    <text evidence="1">Interacts with RTP3 and RTP4.</text>
</comment>
<comment type="subcellular location">
    <subcellularLocation>
        <location evidence="1">Cell membrane</location>
        <topology evidence="2">Multi-pass membrane protein</topology>
    </subcellularLocation>
</comment>
<comment type="tissue specificity">
    <text evidence="3">Expressed in subsets of taste receptor cells of the tongue and palate epithelium and exclusively in gustducin-positive cells. Expressed in the antrum and fundus (part of the stomach), duodenum and in gastric endocrine cells.</text>
</comment>
<comment type="miscellaneous">
    <text>Several bitter taste receptors are expressed in a single taste receptor cell.</text>
</comment>
<comment type="similarity">
    <text evidence="4">Belongs to the G-protein coupled receptor T2R family.</text>
</comment>
<feature type="chain" id="PRO_0000082268" description="Taste receptor type 2 member 16">
    <location>
        <begin position="1"/>
        <end position="299"/>
    </location>
</feature>
<feature type="topological domain" description="Extracellular" evidence="2">
    <location>
        <begin position="1"/>
        <end position="5"/>
    </location>
</feature>
<feature type="transmembrane region" description="Helical; Name=1" evidence="2">
    <location>
        <begin position="6"/>
        <end position="26"/>
    </location>
</feature>
<feature type="topological domain" description="Cytoplasmic" evidence="2">
    <location>
        <begin position="27"/>
        <end position="44"/>
    </location>
</feature>
<feature type="transmembrane region" description="Helical; Name=2" evidence="2">
    <location>
        <begin position="45"/>
        <end position="65"/>
    </location>
</feature>
<feature type="topological domain" description="Extracellular" evidence="2">
    <location>
        <begin position="66"/>
        <end position="82"/>
    </location>
</feature>
<feature type="transmembrane region" description="Helical; Name=3" evidence="2">
    <location>
        <begin position="83"/>
        <end position="103"/>
    </location>
</feature>
<feature type="topological domain" description="Cytoplasmic" evidence="2">
    <location>
        <begin position="104"/>
        <end position="125"/>
    </location>
</feature>
<feature type="transmembrane region" description="Helical; Name=4" evidence="2">
    <location>
        <begin position="126"/>
        <end position="146"/>
    </location>
</feature>
<feature type="topological domain" description="Extracellular" evidence="2">
    <location>
        <begin position="147"/>
        <end position="183"/>
    </location>
</feature>
<feature type="transmembrane region" description="Helical; Name=5" evidence="2">
    <location>
        <begin position="184"/>
        <end position="204"/>
    </location>
</feature>
<feature type="topological domain" description="Cytoplasmic" evidence="2">
    <location>
        <begin position="205"/>
        <end position="233"/>
    </location>
</feature>
<feature type="transmembrane region" description="Helical; Name=6" evidence="2">
    <location>
        <begin position="234"/>
        <end position="254"/>
    </location>
</feature>
<feature type="topological domain" description="Extracellular" evidence="2">
    <location>
        <begin position="255"/>
        <end position="258"/>
    </location>
</feature>
<feature type="transmembrane region" description="Helical; Name=7" evidence="2">
    <location>
        <begin position="259"/>
        <end position="279"/>
    </location>
</feature>
<feature type="topological domain" description="Cytoplasmic" evidence="2">
    <location>
        <begin position="280"/>
        <end position="299"/>
    </location>
</feature>
<feature type="glycosylation site" description="N-linked (GlcNAc...) asparagine" evidence="2">
    <location>
        <position position="163"/>
    </location>
</feature>
<name>T2R16_RAT</name>
<evidence type="ECO:0000250" key="1">
    <source>
        <dbReference type="UniProtKB" id="Q9NYV7"/>
    </source>
</evidence>
<evidence type="ECO:0000255" key="2"/>
<evidence type="ECO:0000269" key="3">
    <source>
    </source>
</evidence>
<evidence type="ECO:0000305" key="4"/>
<evidence type="ECO:0000312" key="5">
    <source>
        <dbReference type="RGD" id="620735"/>
    </source>
</evidence>
<reference key="1">
    <citation type="journal article" date="2000" name="Cell">
        <title>A novel family of mammalian taste receptors.</title>
        <authorList>
            <person name="Adler E."/>
            <person name="Hoon M.A."/>
            <person name="Mueller K.L."/>
            <person name="Chandrashekar J."/>
            <person name="Ryba N.J.P."/>
            <person name="Zuker C.S."/>
        </authorList>
    </citation>
    <scope>NUCLEOTIDE SEQUENCE [MRNA]</scope>
    <scope>TOPOLOGY</scope>
</reference>
<reference key="2">
    <citation type="journal article" date="2000" name="Cell">
        <title>T2Rs function as bitter taste receptors.</title>
        <authorList>
            <person name="Chandrashekar J."/>
            <person name="Mueller K.L."/>
            <person name="Hoon M.A."/>
            <person name="Adler E."/>
            <person name="Feng L."/>
            <person name="Guo W."/>
            <person name="Zuker C.S."/>
            <person name="Ryba N.J.P."/>
        </authorList>
    </citation>
    <scope>CHARACTERIZATION</scope>
</reference>
<reference key="3">
    <citation type="journal article" date="2002" name="Proc. Natl. Acad. Sci. U.S.A.">
        <title>Expression of bitter taste receptors of the T2R family in the gastrointestinal tract and enteroendocrine STC-1 cells.</title>
        <authorList>
            <person name="Wu S.V."/>
            <person name="Rozengurt N."/>
            <person name="Yang M."/>
            <person name="Young S.H."/>
            <person name="Sinnett-Smith J."/>
            <person name="Rozengurt E."/>
        </authorList>
    </citation>
    <scope>TISSUE SPECIFICITY</scope>
</reference>
<reference key="4">
    <citation type="journal article" date="2002" name="Curr. Opin. Neurobiol.">
        <title>Receptors for bitter and sweet taste.</title>
        <authorList>
            <person name="Montmayeur J.-P."/>
            <person name="Matsunami H."/>
        </authorList>
    </citation>
    <scope>REVIEW</scope>
</reference>
<reference key="5">
    <citation type="journal article" date="2002" name="J. Biol. Chem.">
        <title>Molecular mechanisms of bitter and sweet taste transduction.</title>
        <authorList>
            <person name="Margolskee R.F."/>
        </authorList>
    </citation>
    <scope>REVIEW</scope>
</reference>
<reference key="6">
    <citation type="journal article" date="2003" name="Cell">
        <title>Coding of sweet, bitter, and umami tastes: different receptor cells sharing similar signaling pathways.</title>
        <authorList>
            <person name="Zhang Y."/>
            <person name="Hoon M.A."/>
            <person name="Chandrashekar J."/>
            <person name="Mueller K.L."/>
            <person name="Cook B."/>
            <person name="Wu D."/>
            <person name="Zuker C.S."/>
            <person name="Ryba N.J."/>
        </authorList>
    </citation>
    <scope>REVIEW</scope>
</reference>
<keyword id="KW-1003">Cell membrane</keyword>
<keyword id="KW-0297">G-protein coupled receptor</keyword>
<keyword id="KW-0325">Glycoprotein</keyword>
<keyword id="KW-0472">Membrane</keyword>
<keyword id="KW-0675">Receptor</keyword>
<keyword id="KW-1185">Reference proteome</keyword>
<keyword id="KW-0716">Sensory transduction</keyword>
<keyword id="KW-0919">Taste</keyword>
<keyword id="KW-0807">Transducer</keyword>
<keyword id="KW-0812">Transmembrane</keyword>
<keyword id="KW-1133">Transmembrane helix</keyword>